<accession>P28338</accession>
<comment type="function">
    <text>Conjugation of reduced glutathione to a wide number of exogenous and endogenous hydrophobic electrophiles.</text>
</comment>
<comment type="catalytic activity">
    <reaction>
        <text>RX + glutathione = an S-substituted glutathione + a halide anion + H(+)</text>
        <dbReference type="Rhea" id="RHEA:16437"/>
        <dbReference type="ChEBI" id="CHEBI:15378"/>
        <dbReference type="ChEBI" id="CHEBI:16042"/>
        <dbReference type="ChEBI" id="CHEBI:17792"/>
        <dbReference type="ChEBI" id="CHEBI:57925"/>
        <dbReference type="ChEBI" id="CHEBI:90779"/>
        <dbReference type="EC" id="2.5.1.18"/>
    </reaction>
</comment>
<comment type="subunit">
    <text evidence="1">Homodimer.</text>
</comment>
<comment type="similarity">
    <text evidence="2">Belongs to the GST superfamily. Theta family.</text>
</comment>
<dbReference type="EC" id="2.5.1.18"/>
<dbReference type="EMBL" id="X61302">
    <property type="protein sequence ID" value="CAA43599.1"/>
    <property type="molecule type" value="Genomic_DNA"/>
</dbReference>
<dbReference type="EMBL" id="M83249">
    <property type="protein sequence ID" value="AAA29294.1"/>
    <property type="molecule type" value="mRNA"/>
</dbReference>
<dbReference type="PIR" id="A42045">
    <property type="entry name" value="A42045"/>
</dbReference>
<dbReference type="PDB" id="5ZWP">
    <property type="method" value="X-ray"/>
    <property type="resolution" value="1.40 A"/>
    <property type="chains" value="A/B=1-208"/>
</dbReference>
<dbReference type="PDBsum" id="5ZWP"/>
<dbReference type="SMR" id="P28338"/>
<dbReference type="STRING" id="7370.P28338"/>
<dbReference type="VEuPathDB" id="VectorBase:MDOA006158"/>
<dbReference type="VEuPathDB" id="VectorBase:MDOMA2_013609"/>
<dbReference type="eggNOG" id="KOG0867">
    <property type="taxonomic scope" value="Eukaryota"/>
</dbReference>
<dbReference type="Proteomes" id="UP000694905">
    <property type="component" value="Unplaced"/>
</dbReference>
<dbReference type="GO" id="GO:0004364">
    <property type="term" value="F:glutathione transferase activity"/>
    <property type="evidence" value="ECO:0007669"/>
    <property type="project" value="UniProtKB-EC"/>
</dbReference>
<dbReference type="GO" id="GO:0006749">
    <property type="term" value="P:glutathione metabolic process"/>
    <property type="evidence" value="ECO:0007669"/>
    <property type="project" value="TreeGrafter"/>
</dbReference>
<dbReference type="CDD" id="cd03177">
    <property type="entry name" value="GST_C_Delta_Epsilon"/>
    <property type="match status" value="1"/>
</dbReference>
<dbReference type="CDD" id="cd03045">
    <property type="entry name" value="GST_N_Delta_Epsilon"/>
    <property type="match status" value="1"/>
</dbReference>
<dbReference type="FunFam" id="3.40.30.10:FF:000034">
    <property type="entry name" value="glutathione S-transferase 1"/>
    <property type="match status" value="1"/>
</dbReference>
<dbReference type="FunFam" id="1.20.1050.10:FF:000007">
    <property type="entry name" value="Glutathione S-transferase 1-1"/>
    <property type="match status" value="1"/>
</dbReference>
<dbReference type="Gene3D" id="1.20.1050.10">
    <property type="match status" value="1"/>
</dbReference>
<dbReference type="Gene3D" id="3.40.30.10">
    <property type="entry name" value="Glutaredoxin"/>
    <property type="match status" value="1"/>
</dbReference>
<dbReference type="InterPro" id="IPR010987">
    <property type="entry name" value="Glutathione-S-Trfase_C-like"/>
</dbReference>
<dbReference type="InterPro" id="IPR036282">
    <property type="entry name" value="Glutathione-S-Trfase_C_sf"/>
</dbReference>
<dbReference type="InterPro" id="IPR040079">
    <property type="entry name" value="Glutathione_S-Trfase"/>
</dbReference>
<dbReference type="InterPro" id="IPR004045">
    <property type="entry name" value="Glutathione_S-Trfase_N"/>
</dbReference>
<dbReference type="InterPro" id="IPR004046">
    <property type="entry name" value="GST_C"/>
</dbReference>
<dbReference type="InterPro" id="IPR036249">
    <property type="entry name" value="Thioredoxin-like_sf"/>
</dbReference>
<dbReference type="PANTHER" id="PTHR43969">
    <property type="entry name" value="GLUTATHIONE S TRANSFERASE D10, ISOFORM A-RELATED"/>
    <property type="match status" value="1"/>
</dbReference>
<dbReference type="PANTHER" id="PTHR43969:SF9">
    <property type="entry name" value="GLUTATHIONE S TRANSFERASE D10, ISOFORM A-RELATED"/>
    <property type="match status" value="1"/>
</dbReference>
<dbReference type="Pfam" id="PF00043">
    <property type="entry name" value="GST_C"/>
    <property type="match status" value="1"/>
</dbReference>
<dbReference type="Pfam" id="PF02798">
    <property type="entry name" value="GST_N"/>
    <property type="match status" value="1"/>
</dbReference>
<dbReference type="SFLD" id="SFLDS00019">
    <property type="entry name" value="Glutathione_Transferase_(cytos"/>
    <property type="match status" value="1"/>
</dbReference>
<dbReference type="SFLD" id="SFLDG01153">
    <property type="entry name" value="Main.4:_Theta-like"/>
    <property type="match status" value="1"/>
</dbReference>
<dbReference type="SUPFAM" id="SSF47616">
    <property type="entry name" value="GST C-terminal domain-like"/>
    <property type="match status" value="1"/>
</dbReference>
<dbReference type="SUPFAM" id="SSF52833">
    <property type="entry name" value="Thioredoxin-like"/>
    <property type="match status" value="1"/>
</dbReference>
<dbReference type="PROSITE" id="PS50405">
    <property type="entry name" value="GST_CTER"/>
    <property type="match status" value="1"/>
</dbReference>
<dbReference type="PROSITE" id="PS50404">
    <property type="entry name" value="GST_NTER"/>
    <property type="match status" value="1"/>
</dbReference>
<evidence type="ECO:0000250" key="1"/>
<evidence type="ECO:0000305" key="2"/>
<evidence type="ECO:0007829" key="3">
    <source>
        <dbReference type="PDB" id="5ZWP"/>
    </source>
</evidence>
<gene>
    <name type="primary">Gst1</name>
    <name type="synonym">Gst-1</name>
</gene>
<sequence>MDFYYLPGSAPCRSVLMTAKALGIELNKKLLNLQAGEHLKPEFLKINPQHTIPTLVDGDFALWESRAIMVYLVEKYGKTDSLFPKCPKKRAVINQRLYFDMGTLYKSFADYYYPQIFAKAPADPELFKKIETAFDFLNTFLKGHEYAAGDSLTVADLALLASVSTFEVASFDFSKYPNVAKWYANLKTVAPGWEENWAGCLEFKKYFG</sequence>
<protein>
    <recommendedName>
        <fullName>Glutathione S-transferase 1</fullName>
        <ecNumber>2.5.1.18</ecNumber>
    </recommendedName>
    <alternativeName>
        <fullName>GST class-theta</fullName>
    </alternativeName>
</protein>
<organism>
    <name type="scientific">Musca domestica</name>
    <name type="common">House fly</name>
    <dbReference type="NCBI Taxonomy" id="7370"/>
    <lineage>
        <taxon>Eukaryota</taxon>
        <taxon>Metazoa</taxon>
        <taxon>Ecdysozoa</taxon>
        <taxon>Arthropoda</taxon>
        <taxon>Hexapoda</taxon>
        <taxon>Insecta</taxon>
        <taxon>Pterygota</taxon>
        <taxon>Neoptera</taxon>
        <taxon>Endopterygota</taxon>
        <taxon>Diptera</taxon>
        <taxon>Brachycera</taxon>
        <taxon>Muscomorpha</taxon>
        <taxon>Muscoidea</taxon>
        <taxon>Muscidae</taxon>
        <taxon>Musca</taxon>
    </lineage>
</organism>
<feature type="chain" id="PRO_0000185965" description="Glutathione S-transferase 1">
    <location>
        <begin position="1"/>
        <end position="208"/>
    </location>
</feature>
<feature type="domain" description="GST N-terminal">
    <location>
        <begin position="1"/>
        <end position="80"/>
    </location>
</feature>
<feature type="domain" description="GST C-terminal">
    <location>
        <begin position="86"/>
        <end position="207"/>
    </location>
</feature>
<feature type="binding site" evidence="1">
    <location>
        <position position="9"/>
    </location>
    <ligand>
        <name>glutathione</name>
        <dbReference type="ChEBI" id="CHEBI:57925"/>
    </ligand>
</feature>
<feature type="binding site" evidence="1">
    <location>
        <begin position="50"/>
        <end position="52"/>
    </location>
    <ligand>
        <name>glutathione</name>
        <dbReference type="ChEBI" id="CHEBI:57925"/>
    </ligand>
</feature>
<feature type="binding site" evidence="1">
    <location>
        <begin position="64"/>
        <end position="66"/>
    </location>
    <ligand>
        <name>glutathione</name>
        <dbReference type="ChEBI" id="CHEBI:57925"/>
    </ligand>
</feature>
<feature type="strand" evidence="3">
    <location>
        <begin position="2"/>
        <end position="5"/>
    </location>
</feature>
<feature type="helix" evidence="3">
    <location>
        <begin position="10"/>
        <end position="21"/>
    </location>
</feature>
<feature type="strand" evidence="3">
    <location>
        <begin position="27"/>
        <end position="30"/>
    </location>
</feature>
<feature type="turn" evidence="3">
    <location>
        <begin position="33"/>
        <end position="36"/>
    </location>
</feature>
<feature type="helix" evidence="3">
    <location>
        <begin position="37"/>
        <end position="39"/>
    </location>
</feature>
<feature type="helix" evidence="3">
    <location>
        <begin position="41"/>
        <end position="46"/>
    </location>
</feature>
<feature type="strand" evidence="3">
    <location>
        <begin position="54"/>
        <end position="57"/>
    </location>
</feature>
<feature type="strand" evidence="3">
    <location>
        <begin position="60"/>
        <end position="64"/>
    </location>
</feature>
<feature type="helix" evidence="3">
    <location>
        <begin position="65"/>
        <end position="76"/>
    </location>
</feature>
<feature type="strand" evidence="3">
    <location>
        <begin position="78"/>
        <end position="80"/>
    </location>
</feature>
<feature type="helix" evidence="3">
    <location>
        <begin position="87"/>
        <end position="102"/>
    </location>
</feature>
<feature type="helix" evidence="3">
    <location>
        <begin position="104"/>
        <end position="118"/>
    </location>
</feature>
<feature type="helix" evidence="3">
    <location>
        <begin position="124"/>
        <end position="140"/>
    </location>
</feature>
<feature type="turn" evidence="3">
    <location>
        <begin position="141"/>
        <end position="143"/>
    </location>
</feature>
<feature type="strand" evidence="3">
    <location>
        <begin position="149"/>
        <end position="151"/>
    </location>
</feature>
<feature type="helix" evidence="3">
    <location>
        <begin position="154"/>
        <end position="168"/>
    </location>
</feature>
<feature type="helix" evidence="3">
    <location>
        <begin position="173"/>
        <end position="175"/>
    </location>
</feature>
<feature type="helix" evidence="3">
    <location>
        <begin position="177"/>
        <end position="189"/>
    </location>
</feature>
<feature type="helix" evidence="3">
    <location>
        <begin position="193"/>
        <end position="204"/>
    </location>
</feature>
<name>GSTT1_MUSDO</name>
<reference key="1">
    <citation type="journal article" date="1991" name="Mol. Gen. Genet.">
        <title>Molecular cloning of a glutathione S-transferase overproduced in an insecticide-resistant strain of the housefly (Musca domestica).</title>
        <authorList>
            <person name="Wang J."/>
            <person name="McCommas S."/>
            <person name="Syvanen M."/>
        </authorList>
    </citation>
    <scope>NUCLEOTIDE SEQUENCE</scope>
</reference>
<reference key="2">
    <citation type="journal article" date="1992" name="J. Biol. Chem.">
        <title>Insect glutathione S-transferases. Biochemical characteristics of the major forms from houseflies susceptible and resistant to insecticides.</title>
        <authorList>
            <person name="Fournier D."/>
            <person name="Bride J.-M."/>
            <person name="Poirie M."/>
            <person name="Berge J.-B."/>
            <person name="Plapp F.W."/>
        </authorList>
    </citation>
    <scope>NUCLEOTIDE SEQUENCE [MRNA]</scope>
</reference>
<reference key="3">
    <citation type="journal article" date="1991" name="Mol. Gen. Genet.">
        <title>Germinal and somatic products of Mu1 excision from the Bronze-1 gene of Zea mays.</title>
        <authorList>
            <person name="Britt A.B."/>
            <person name="Walbot V."/>
        </authorList>
    </citation>
    <scope>NUCLEOTIDE SEQUENCE [GENOMIC DNA]</scope>
</reference>
<keyword id="KW-0002">3D-structure</keyword>
<keyword id="KW-1185">Reference proteome</keyword>
<keyword id="KW-0808">Transferase</keyword>
<proteinExistence type="evidence at protein level"/>